<feature type="chain" id="PRO_0000263145" description="Bifunctional protein GlmU">
    <location>
        <begin position="1"/>
        <end position="480"/>
    </location>
</feature>
<feature type="region of interest" description="Pyrophosphorylase" evidence="1">
    <location>
        <begin position="1"/>
        <end position="247"/>
    </location>
</feature>
<feature type="region of interest" description="Linker" evidence="1">
    <location>
        <begin position="248"/>
        <end position="268"/>
    </location>
</feature>
<feature type="region of interest" description="N-acetyltransferase" evidence="1">
    <location>
        <begin position="269"/>
        <end position="480"/>
    </location>
</feature>
<feature type="active site" description="Proton acceptor" evidence="1">
    <location>
        <position position="385"/>
    </location>
</feature>
<feature type="binding site" evidence="1">
    <location>
        <position position="24"/>
    </location>
    <ligand>
        <name>UDP-N-acetyl-alpha-D-glucosamine</name>
        <dbReference type="ChEBI" id="CHEBI:57705"/>
    </ligand>
</feature>
<feature type="binding site" evidence="1">
    <location>
        <position position="86"/>
    </location>
    <ligand>
        <name>UDP-N-acetyl-alpha-D-glucosamine</name>
        <dbReference type="ChEBI" id="CHEBI:57705"/>
    </ligand>
</feature>
<feature type="binding site" evidence="1">
    <location>
        <begin position="91"/>
        <end position="92"/>
    </location>
    <ligand>
        <name>UDP-N-acetyl-alpha-D-glucosamine</name>
        <dbReference type="ChEBI" id="CHEBI:57705"/>
    </ligand>
</feature>
<feature type="binding site" evidence="1">
    <location>
        <begin position="113"/>
        <end position="115"/>
    </location>
    <ligand>
        <name>UDP-N-acetyl-alpha-D-glucosamine</name>
        <dbReference type="ChEBI" id="CHEBI:57705"/>
    </ligand>
</feature>
<feature type="binding site" evidence="1">
    <location>
        <position position="115"/>
    </location>
    <ligand>
        <name>Mg(2+)</name>
        <dbReference type="ChEBI" id="CHEBI:18420"/>
    </ligand>
</feature>
<feature type="binding site" evidence="1">
    <location>
        <position position="150"/>
    </location>
    <ligand>
        <name>UDP-N-acetyl-alpha-D-glucosamine</name>
        <dbReference type="ChEBI" id="CHEBI:57705"/>
    </ligand>
</feature>
<feature type="binding site" evidence="1">
    <location>
        <position position="172"/>
    </location>
    <ligand>
        <name>UDP-N-acetyl-alpha-D-glucosamine</name>
        <dbReference type="ChEBI" id="CHEBI:57705"/>
    </ligand>
</feature>
<feature type="binding site" evidence="1">
    <location>
        <position position="245"/>
    </location>
    <ligand>
        <name>Mg(2+)</name>
        <dbReference type="ChEBI" id="CHEBI:18420"/>
    </ligand>
</feature>
<feature type="binding site" evidence="1">
    <location>
        <position position="245"/>
    </location>
    <ligand>
        <name>UDP-N-acetyl-alpha-D-glucosamine</name>
        <dbReference type="ChEBI" id="CHEBI:57705"/>
    </ligand>
</feature>
<feature type="binding site" evidence="1">
    <location>
        <position position="355"/>
    </location>
    <ligand>
        <name>UDP-N-acetyl-alpha-D-glucosamine</name>
        <dbReference type="ChEBI" id="CHEBI:57705"/>
    </ligand>
</feature>
<feature type="binding site" evidence="1">
    <location>
        <position position="373"/>
    </location>
    <ligand>
        <name>UDP-N-acetyl-alpha-D-glucosamine</name>
        <dbReference type="ChEBI" id="CHEBI:57705"/>
    </ligand>
</feature>
<feature type="binding site" evidence="1">
    <location>
        <position position="388"/>
    </location>
    <ligand>
        <name>UDP-N-acetyl-alpha-D-glucosamine</name>
        <dbReference type="ChEBI" id="CHEBI:57705"/>
    </ligand>
</feature>
<feature type="binding site" evidence="1">
    <location>
        <position position="399"/>
    </location>
    <ligand>
        <name>UDP-N-acetyl-alpha-D-glucosamine</name>
        <dbReference type="ChEBI" id="CHEBI:57705"/>
    </ligand>
</feature>
<feature type="binding site" evidence="1">
    <location>
        <position position="402"/>
    </location>
    <ligand>
        <name>acetyl-CoA</name>
        <dbReference type="ChEBI" id="CHEBI:57288"/>
    </ligand>
</feature>
<feature type="binding site" evidence="1">
    <location>
        <begin position="408"/>
        <end position="409"/>
    </location>
    <ligand>
        <name>acetyl-CoA</name>
        <dbReference type="ChEBI" id="CHEBI:57288"/>
    </ligand>
</feature>
<feature type="binding site" evidence="1">
    <location>
        <position position="427"/>
    </location>
    <ligand>
        <name>acetyl-CoA</name>
        <dbReference type="ChEBI" id="CHEBI:57288"/>
    </ligand>
</feature>
<feature type="binding site" evidence="1">
    <location>
        <position position="445"/>
    </location>
    <ligand>
        <name>acetyl-CoA</name>
        <dbReference type="ChEBI" id="CHEBI:57288"/>
    </ligand>
</feature>
<feature type="binding site" evidence="1">
    <location>
        <position position="462"/>
    </location>
    <ligand>
        <name>acetyl-CoA</name>
        <dbReference type="ChEBI" id="CHEBI:57288"/>
    </ligand>
</feature>
<accession>Q12FR3</accession>
<reference key="1">
    <citation type="journal article" date="2008" name="Appl. Environ. Microbiol.">
        <title>The genome of Polaromonas sp. strain JS666: insights into the evolution of a hydrocarbon- and xenobiotic-degrading bacterium, and features of relevance to biotechnology.</title>
        <authorList>
            <person name="Mattes T.E."/>
            <person name="Alexander A.K."/>
            <person name="Richardson P.M."/>
            <person name="Munk A.C."/>
            <person name="Han C.S."/>
            <person name="Stothard P."/>
            <person name="Coleman N.V."/>
        </authorList>
    </citation>
    <scope>NUCLEOTIDE SEQUENCE [LARGE SCALE GENOMIC DNA]</scope>
    <source>
        <strain>JS666 / ATCC BAA-500</strain>
    </source>
</reference>
<sequence>MATPIDVVIMAAGKGTRMKSALPKVLHQLGGRALLAHVIDCAARLSARQAVVIAGHGAADVEAACAHLTRAAGDARQDLSLKFARQEPQLGTGHAVQQALPLLADDGVTLVLSGDVPLTQPATLRALLEQCDGQRLALLTLNMADPTGYGRIVRAGTQATAQASSQVRAIVEHKDATEAQRGIHEIYSGIMAVPTRLLRGWIHRLDNKNVQSEYYLTDIVKFAVADGVAVVAHQITDAAQVAGVNSPVQLAELERVYQLRQATALMEQGVRLADPARFDVRGTLQCGQDVEIDVNCVFAGQVSLGEGVRIGANCVIANATIAAGAVIHPFTHIDGEKLGVQVGEGALIGPFARLRPGAQLGAEVHIGNFVEVKNSTLAKGAKANHLAYLGDATVGERVNYGAGSITANYDGANKHRTVIEADVHIGSNCVLVAPVTIGQGGTVGGGSTITKDTPPGALSVARGKQVSLPNWKRPVKVSKG</sequence>
<keyword id="KW-0012">Acyltransferase</keyword>
<keyword id="KW-0133">Cell shape</keyword>
<keyword id="KW-0961">Cell wall biogenesis/degradation</keyword>
<keyword id="KW-0963">Cytoplasm</keyword>
<keyword id="KW-0460">Magnesium</keyword>
<keyword id="KW-0479">Metal-binding</keyword>
<keyword id="KW-0511">Multifunctional enzyme</keyword>
<keyword id="KW-0548">Nucleotidyltransferase</keyword>
<keyword id="KW-0573">Peptidoglycan synthesis</keyword>
<keyword id="KW-1185">Reference proteome</keyword>
<keyword id="KW-0677">Repeat</keyword>
<keyword id="KW-0808">Transferase</keyword>
<name>GLMU_POLSJ</name>
<gene>
    <name evidence="1" type="primary">glmU</name>
    <name type="ordered locus">Bpro_0671</name>
</gene>
<comment type="function">
    <text evidence="1">Catalyzes the last two sequential reactions in the de novo biosynthetic pathway for UDP-N-acetylglucosamine (UDP-GlcNAc). The C-terminal domain catalyzes the transfer of acetyl group from acetyl coenzyme A to glucosamine-1-phosphate (GlcN-1-P) to produce N-acetylglucosamine-1-phosphate (GlcNAc-1-P), which is converted into UDP-GlcNAc by the transfer of uridine 5-monophosphate (from uridine 5-triphosphate), a reaction catalyzed by the N-terminal domain.</text>
</comment>
<comment type="catalytic activity">
    <reaction evidence="1">
        <text>alpha-D-glucosamine 1-phosphate + acetyl-CoA = N-acetyl-alpha-D-glucosamine 1-phosphate + CoA + H(+)</text>
        <dbReference type="Rhea" id="RHEA:13725"/>
        <dbReference type="ChEBI" id="CHEBI:15378"/>
        <dbReference type="ChEBI" id="CHEBI:57287"/>
        <dbReference type="ChEBI" id="CHEBI:57288"/>
        <dbReference type="ChEBI" id="CHEBI:57776"/>
        <dbReference type="ChEBI" id="CHEBI:58516"/>
        <dbReference type="EC" id="2.3.1.157"/>
    </reaction>
</comment>
<comment type="catalytic activity">
    <reaction evidence="1">
        <text>N-acetyl-alpha-D-glucosamine 1-phosphate + UTP + H(+) = UDP-N-acetyl-alpha-D-glucosamine + diphosphate</text>
        <dbReference type="Rhea" id="RHEA:13509"/>
        <dbReference type="ChEBI" id="CHEBI:15378"/>
        <dbReference type="ChEBI" id="CHEBI:33019"/>
        <dbReference type="ChEBI" id="CHEBI:46398"/>
        <dbReference type="ChEBI" id="CHEBI:57705"/>
        <dbReference type="ChEBI" id="CHEBI:57776"/>
        <dbReference type="EC" id="2.7.7.23"/>
    </reaction>
</comment>
<comment type="cofactor">
    <cofactor evidence="1">
        <name>Mg(2+)</name>
        <dbReference type="ChEBI" id="CHEBI:18420"/>
    </cofactor>
    <text evidence="1">Binds 1 Mg(2+) ion per subunit.</text>
</comment>
<comment type="pathway">
    <text evidence="1">Nucleotide-sugar biosynthesis; UDP-N-acetyl-alpha-D-glucosamine biosynthesis; N-acetyl-alpha-D-glucosamine 1-phosphate from alpha-D-glucosamine 6-phosphate (route II): step 2/2.</text>
</comment>
<comment type="pathway">
    <text evidence="1">Nucleotide-sugar biosynthesis; UDP-N-acetyl-alpha-D-glucosamine biosynthesis; UDP-N-acetyl-alpha-D-glucosamine from N-acetyl-alpha-D-glucosamine 1-phosphate: step 1/1.</text>
</comment>
<comment type="pathway">
    <text evidence="1">Bacterial outer membrane biogenesis; LPS lipid A biosynthesis.</text>
</comment>
<comment type="subunit">
    <text evidence="1">Homotrimer.</text>
</comment>
<comment type="subcellular location">
    <subcellularLocation>
        <location evidence="1">Cytoplasm</location>
    </subcellularLocation>
</comment>
<comment type="similarity">
    <text evidence="1">In the N-terminal section; belongs to the N-acetylglucosamine-1-phosphate uridyltransferase family.</text>
</comment>
<comment type="similarity">
    <text evidence="1">In the C-terminal section; belongs to the transferase hexapeptide repeat family.</text>
</comment>
<protein>
    <recommendedName>
        <fullName evidence="1">Bifunctional protein GlmU</fullName>
    </recommendedName>
    <domain>
        <recommendedName>
            <fullName evidence="1">UDP-N-acetylglucosamine pyrophosphorylase</fullName>
            <ecNumber evidence="1">2.7.7.23</ecNumber>
        </recommendedName>
        <alternativeName>
            <fullName evidence="1">N-acetylglucosamine-1-phosphate uridyltransferase</fullName>
        </alternativeName>
    </domain>
    <domain>
        <recommendedName>
            <fullName evidence="1">Glucosamine-1-phosphate N-acetyltransferase</fullName>
            <ecNumber evidence="1">2.3.1.157</ecNumber>
        </recommendedName>
    </domain>
</protein>
<proteinExistence type="inferred from homology"/>
<organism>
    <name type="scientific">Polaromonas sp. (strain JS666 / ATCC BAA-500)</name>
    <dbReference type="NCBI Taxonomy" id="296591"/>
    <lineage>
        <taxon>Bacteria</taxon>
        <taxon>Pseudomonadati</taxon>
        <taxon>Pseudomonadota</taxon>
        <taxon>Betaproteobacteria</taxon>
        <taxon>Burkholderiales</taxon>
        <taxon>Comamonadaceae</taxon>
        <taxon>Polaromonas</taxon>
    </lineage>
</organism>
<evidence type="ECO:0000255" key="1">
    <source>
        <dbReference type="HAMAP-Rule" id="MF_01631"/>
    </source>
</evidence>
<dbReference type="EC" id="2.7.7.23" evidence="1"/>
<dbReference type="EC" id="2.3.1.157" evidence="1"/>
<dbReference type="EMBL" id="CP000316">
    <property type="protein sequence ID" value="ABE42629.1"/>
    <property type="molecule type" value="Genomic_DNA"/>
</dbReference>
<dbReference type="RefSeq" id="WP_011481632.1">
    <property type="nucleotide sequence ID" value="NC_007948.1"/>
</dbReference>
<dbReference type="SMR" id="Q12FR3"/>
<dbReference type="STRING" id="296591.Bpro_0671"/>
<dbReference type="KEGG" id="pol:Bpro_0671"/>
<dbReference type="eggNOG" id="COG1207">
    <property type="taxonomic scope" value="Bacteria"/>
</dbReference>
<dbReference type="HOGENOM" id="CLU_029499_15_2_4"/>
<dbReference type="OrthoDB" id="9775031at2"/>
<dbReference type="UniPathway" id="UPA00113">
    <property type="reaction ID" value="UER00532"/>
</dbReference>
<dbReference type="UniPathway" id="UPA00113">
    <property type="reaction ID" value="UER00533"/>
</dbReference>
<dbReference type="UniPathway" id="UPA00973"/>
<dbReference type="Proteomes" id="UP000001983">
    <property type="component" value="Chromosome"/>
</dbReference>
<dbReference type="GO" id="GO:0005737">
    <property type="term" value="C:cytoplasm"/>
    <property type="evidence" value="ECO:0007669"/>
    <property type="project" value="UniProtKB-SubCell"/>
</dbReference>
<dbReference type="GO" id="GO:0016020">
    <property type="term" value="C:membrane"/>
    <property type="evidence" value="ECO:0007669"/>
    <property type="project" value="GOC"/>
</dbReference>
<dbReference type="GO" id="GO:0019134">
    <property type="term" value="F:glucosamine-1-phosphate N-acetyltransferase activity"/>
    <property type="evidence" value="ECO:0007669"/>
    <property type="project" value="UniProtKB-UniRule"/>
</dbReference>
<dbReference type="GO" id="GO:0000287">
    <property type="term" value="F:magnesium ion binding"/>
    <property type="evidence" value="ECO:0007669"/>
    <property type="project" value="UniProtKB-UniRule"/>
</dbReference>
<dbReference type="GO" id="GO:0003977">
    <property type="term" value="F:UDP-N-acetylglucosamine diphosphorylase activity"/>
    <property type="evidence" value="ECO:0007669"/>
    <property type="project" value="UniProtKB-UniRule"/>
</dbReference>
<dbReference type="GO" id="GO:0000902">
    <property type="term" value="P:cell morphogenesis"/>
    <property type="evidence" value="ECO:0007669"/>
    <property type="project" value="UniProtKB-UniRule"/>
</dbReference>
<dbReference type="GO" id="GO:0071555">
    <property type="term" value="P:cell wall organization"/>
    <property type="evidence" value="ECO:0007669"/>
    <property type="project" value="UniProtKB-KW"/>
</dbReference>
<dbReference type="GO" id="GO:0009245">
    <property type="term" value="P:lipid A biosynthetic process"/>
    <property type="evidence" value="ECO:0007669"/>
    <property type="project" value="UniProtKB-UniRule"/>
</dbReference>
<dbReference type="GO" id="GO:0009252">
    <property type="term" value="P:peptidoglycan biosynthetic process"/>
    <property type="evidence" value="ECO:0007669"/>
    <property type="project" value="UniProtKB-UniRule"/>
</dbReference>
<dbReference type="GO" id="GO:0008360">
    <property type="term" value="P:regulation of cell shape"/>
    <property type="evidence" value="ECO:0007669"/>
    <property type="project" value="UniProtKB-KW"/>
</dbReference>
<dbReference type="GO" id="GO:0006048">
    <property type="term" value="P:UDP-N-acetylglucosamine biosynthetic process"/>
    <property type="evidence" value="ECO:0007669"/>
    <property type="project" value="UniProtKB-UniPathway"/>
</dbReference>
<dbReference type="CDD" id="cd02540">
    <property type="entry name" value="GT2_GlmU_N_bac"/>
    <property type="match status" value="1"/>
</dbReference>
<dbReference type="CDD" id="cd03353">
    <property type="entry name" value="LbH_GlmU_C"/>
    <property type="match status" value="1"/>
</dbReference>
<dbReference type="Gene3D" id="2.160.10.10">
    <property type="entry name" value="Hexapeptide repeat proteins"/>
    <property type="match status" value="1"/>
</dbReference>
<dbReference type="Gene3D" id="3.90.550.10">
    <property type="entry name" value="Spore Coat Polysaccharide Biosynthesis Protein SpsA, Chain A"/>
    <property type="match status" value="1"/>
</dbReference>
<dbReference type="HAMAP" id="MF_01631">
    <property type="entry name" value="GlmU"/>
    <property type="match status" value="1"/>
</dbReference>
<dbReference type="InterPro" id="IPR005882">
    <property type="entry name" value="Bifunctional_GlmU"/>
</dbReference>
<dbReference type="InterPro" id="IPR050065">
    <property type="entry name" value="GlmU-like"/>
</dbReference>
<dbReference type="InterPro" id="IPR038009">
    <property type="entry name" value="GlmU_C_LbH"/>
</dbReference>
<dbReference type="InterPro" id="IPR001451">
    <property type="entry name" value="Hexapep"/>
</dbReference>
<dbReference type="InterPro" id="IPR025877">
    <property type="entry name" value="MobA-like_NTP_Trfase"/>
</dbReference>
<dbReference type="InterPro" id="IPR029044">
    <property type="entry name" value="Nucleotide-diphossugar_trans"/>
</dbReference>
<dbReference type="InterPro" id="IPR011004">
    <property type="entry name" value="Trimer_LpxA-like_sf"/>
</dbReference>
<dbReference type="NCBIfam" id="TIGR01173">
    <property type="entry name" value="glmU"/>
    <property type="match status" value="1"/>
</dbReference>
<dbReference type="PANTHER" id="PTHR43584:SF3">
    <property type="entry name" value="BIFUNCTIONAL PROTEIN GLMU"/>
    <property type="match status" value="1"/>
</dbReference>
<dbReference type="PANTHER" id="PTHR43584">
    <property type="entry name" value="NUCLEOTIDYL TRANSFERASE"/>
    <property type="match status" value="1"/>
</dbReference>
<dbReference type="Pfam" id="PF00132">
    <property type="entry name" value="Hexapep"/>
    <property type="match status" value="3"/>
</dbReference>
<dbReference type="Pfam" id="PF12804">
    <property type="entry name" value="NTP_transf_3"/>
    <property type="match status" value="1"/>
</dbReference>
<dbReference type="SUPFAM" id="SSF53448">
    <property type="entry name" value="Nucleotide-diphospho-sugar transferases"/>
    <property type="match status" value="1"/>
</dbReference>
<dbReference type="SUPFAM" id="SSF51161">
    <property type="entry name" value="Trimeric LpxA-like enzymes"/>
    <property type="match status" value="1"/>
</dbReference>